<gene>
    <name type="primary">NUF2</name>
    <name type="ordered locus">CAGL0J11572g</name>
</gene>
<sequence>MATPTQDIFPLLDLEELVICLQSCDFAMATEEHIARPTSQYVITLYKQIIENFMGISPEQVLAEQLSSRQNTEGNDESTSVDMFDGPYRETLQMLTLNKICYKFFENVGINDFNIVDLYKPEAYRTRRLLSAVVNYARFREERMFDCNQFIIQMEEMLDELKSKFDDFNYLKAQLTAIEDDDEKTPGELEDLLQKNKVLETNLKKLTILQEKLSIDYNNYKMKKQELLRELEKNSFTLIELESKKERLMNYNDDDQDLQNSLNNSIDRLTEEKKKQIGYVSKLEGNVSNLKVTVDTLEKAIEHIYDILRLLSTDLQESHRAELNIEGIKGPLTEKRTRLKNLLESNVIYKYDVLKEQLNVAETEYQRINEEHYRETLENKKLIQELEGKYNNIIHNKMQEAEVYIENEITEKKIKILQSELNDIQIQFNNEIDNIELHYSTLVGHINNYMKKLITALNNH</sequence>
<keyword id="KW-0131">Cell cycle</keyword>
<keyword id="KW-0132">Cell division</keyword>
<keyword id="KW-0137">Centromere</keyword>
<keyword id="KW-0158">Chromosome</keyword>
<keyword id="KW-0175">Coiled coil</keyword>
<keyword id="KW-0995">Kinetochore</keyword>
<keyword id="KW-0498">Mitosis</keyword>
<keyword id="KW-0539">Nucleus</keyword>
<keyword id="KW-1185">Reference proteome</keyword>
<feature type="chain" id="PRO_0000246648" description="Probable kinetochore protein NUF2">
    <location>
        <begin position="1"/>
        <end position="460"/>
    </location>
</feature>
<feature type="coiled-coil region" evidence="2">
    <location>
        <begin position="155"/>
        <end position="304"/>
    </location>
</feature>
<feature type="coiled-coil region" evidence="2">
    <location>
        <begin position="349"/>
        <end position="437"/>
    </location>
</feature>
<name>NUF2_CANGA</name>
<dbReference type="EMBL" id="CR380956">
    <property type="protein sequence ID" value="CAG61167.1"/>
    <property type="molecule type" value="Genomic_DNA"/>
</dbReference>
<dbReference type="RefSeq" id="XP_448216.1">
    <property type="nucleotide sequence ID" value="XM_448216.1"/>
</dbReference>
<dbReference type="SMR" id="Q6FNH8"/>
<dbReference type="FunCoup" id="Q6FNH8">
    <property type="interactions" value="368"/>
</dbReference>
<dbReference type="STRING" id="284593.Q6FNH8"/>
<dbReference type="EnsemblFungi" id="CAGL0J11572g-T">
    <property type="protein sequence ID" value="CAGL0J11572g-T-p1"/>
    <property type="gene ID" value="CAGL0J11572g"/>
</dbReference>
<dbReference type="GeneID" id="2889456"/>
<dbReference type="KEGG" id="cgr:2889456"/>
<dbReference type="CGD" id="CAL0133736">
    <property type="gene designation" value="NUF2"/>
</dbReference>
<dbReference type="VEuPathDB" id="FungiDB:B1J91_J11572g"/>
<dbReference type="VEuPathDB" id="FungiDB:CAGL0J11572g"/>
<dbReference type="eggNOG" id="KOG4438">
    <property type="taxonomic scope" value="Eukaryota"/>
</dbReference>
<dbReference type="HOGENOM" id="CLU_025461_2_0_1"/>
<dbReference type="InParanoid" id="Q6FNH8"/>
<dbReference type="OMA" id="TKIIEWD"/>
<dbReference type="Proteomes" id="UP000002428">
    <property type="component" value="Chromosome J"/>
</dbReference>
<dbReference type="GO" id="GO:0031262">
    <property type="term" value="C:Ndc80 complex"/>
    <property type="evidence" value="ECO:0000250"/>
    <property type="project" value="UniProtKB"/>
</dbReference>
<dbReference type="GO" id="GO:0005634">
    <property type="term" value="C:nucleus"/>
    <property type="evidence" value="ECO:0007669"/>
    <property type="project" value="UniProtKB-SubCell"/>
</dbReference>
<dbReference type="GO" id="GO:0005876">
    <property type="term" value="C:spindle microtubule"/>
    <property type="evidence" value="ECO:0007669"/>
    <property type="project" value="EnsemblFungi"/>
</dbReference>
<dbReference type="GO" id="GO:0005816">
    <property type="term" value="C:spindle pole body"/>
    <property type="evidence" value="ECO:0007669"/>
    <property type="project" value="EnsemblFungi"/>
</dbReference>
<dbReference type="GO" id="GO:0008017">
    <property type="term" value="F:microtubule binding"/>
    <property type="evidence" value="ECO:0000250"/>
    <property type="project" value="UniProtKB"/>
</dbReference>
<dbReference type="GO" id="GO:0051301">
    <property type="term" value="P:cell division"/>
    <property type="evidence" value="ECO:0007669"/>
    <property type="project" value="UniProtKB-KW"/>
</dbReference>
<dbReference type="GO" id="GO:0007059">
    <property type="term" value="P:chromosome segregation"/>
    <property type="evidence" value="ECO:0007669"/>
    <property type="project" value="EnsemblFungi"/>
</dbReference>
<dbReference type="Gene3D" id="1.10.418.60">
    <property type="entry name" value="Ncd80 complex, Nuf2 subunit"/>
    <property type="match status" value="1"/>
</dbReference>
<dbReference type="InterPro" id="IPR005549">
    <property type="entry name" value="Kinetochore_Nuf2_N"/>
</dbReference>
<dbReference type="InterPro" id="IPR038275">
    <property type="entry name" value="Nuf2_N_sf"/>
</dbReference>
<dbReference type="Pfam" id="PF03800">
    <property type="entry name" value="Nuf2"/>
    <property type="match status" value="1"/>
</dbReference>
<evidence type="ECO:0000250" key="1"/>
<evidence type="ECO:0000255" key="2"/>
<evidence type="ECO:0000305" key="3"/>
<proteinExistence type="inferred from homology"/>
<comment type="function">
    <text evidence="1">Acts as a component of the essential kinetochore-associated NDC80 complex, which is required for chromosome segregation and spindle checkpoint activity.</text>
</comment>
<comment type="subunit">
    <text evidence="1">Component of the NDC80 complex, which consists of NDC80, NUF2, SPC24 and SPC25.</text>
</comment>
<comment type="subcellular location">
    <subcellularLocation>
        <location evidence="1">Nucleus</location>
    </subcellularLocation>
    <subcellularLocation>
        <location evidence="1">Chromosome</location>
        <location evidence="1">Centromere</location>
        <location evidence="1">Kinetochore</location>
    </subcellularLocation>
    <text evidence="1">Associated with kinetochores.</text>
</comment>
<comment type="similarity">
    <text evidence="3">Belongs to the NUF2 family.</text>
</comment>
<accession>Q6FNH8</accession>
<organism>
    <name type="scientific">Candida glabrata (strain ATCC 2001 / BCRC 20586 / JCM 3761 / NBRC 0622 / NRRL Y-65 / CBS 138)</name>
    <name type="common">Yeast</name>
    <name type="synonym">Nakaseomyces glabratus</name>
    <dbReference type="NCBI Taxonomy" id="284593"/>
    <lineage>
        <taxon>Eukaryota</taxon>
        <taxon>Fungi</taxon>
        <taxon>Dikarya</taxon>
        <taxon>Ascomycota</taxon>
        <taxon>Saccharomycotina</taxon>
        <taxon>Saccharomycetes</taxon>
        <taxon>Saccharomycetales</taxon>
        <taxon>Saccharomycetaceae</taxon>
        <taxon>Nakaseomyces</taxon>
    </lineage>
</organism>
<protein>
    <recommendedName>
        <fullName>Probable kinetochore protein NUF2</fullName>
    </recommendedName>
</protein>
<reference key="1">
    <citation type="journal article" date="2004" name="Nature">
        <title>Genome evolution in yeasts.</title>
        <authorList>
            <person name="Dujon B."/>
            <person name="Sherman D."/>
            <person name="Fischer G."/>
            <person name="Durrens P."/>
            <person name="Casaregola S."/>
            <person name="Lafontaine I."/>
            <person name="de Montigny J."/>
            <person name="Marck C."/>
            <person name="Neuveglise C."/>
            <person name="Talla E."/>
            <person name="Goffard N."/>
            <person name="Frangeul L."/>
            <person name="Aigle M."/>
            <person name="Anthouard V."/>
            <person name="Babour A."/>
            <person name="Barbe V."/>
            <person name="Barnay S."/>
            <person name="Blanchin S."/>
            <person name="Beckerich J.-M."/>
            <person name="Beyne E."/>
            <person name="Bleykasten C."/>
            <person name="Boisrame A."/>
            <person name="Boyer J."/>
            <person name="Cattolico L."/>
            <person name="Confanioleri F."/>
            <person name="de Daruvar A."/>
            <person name="Despons L."/>
            <person name="Fabre E."/>
            <person name="Fairhead C."/>
            <person name="Ferry-Dumazet H."/>
            <person name="Groppi A."/>
            <person name="Hantraye F."/>
            <person name="Hennequin C."/>
            <person name="Jauniaux N."/>
            <person name="Joyet P."/>
            <person name="Kachouri R."/>
            <person name="Kerrest A."/>
            <person name="Koszul R."/>
            <person name="Lemaire M."/>
            <person name="Lesur I."/>
            <person name="Ma L."/>
            <person name="Muller H."/>
            <person name="Nicaud J.-M."/>
            <person name="Nikolski M."/>
            <person name="Oztas S."/>
            <person name="Ozier-Kalogeropoulos O."/>
            <person name="Pellenz S."/>
            <person name="Potier S."/>
            <person name="Richard G.-F."/>
            <person name="Straub M.-L."/>
            <person name="Suleau A."/>
            <person name="Swennen D."/>
            <person name="Tekaia F."/>
            <person name="Wesolowski-Louvel M."/>
            <person name="Westhof E."/>
            <person name="Wirth B."/>
            <person name="Zeniou-Meyer M."/>
            <person name="Zivanovic Y."/>
            <person name="Bolotin-Fukuhara M."/>
            <person name="Thierry A."/>
            <person name="Bouchier C."/>
            <person name="Caudron B."/>
            <person name="Scarpelli C."/>
            <person name="Gaillardin C."/>
            <person name="Weissenbach J."/>
            <person name="Wincker P."/>
            <person name="Souciet J.-L."/>
        </authorList>
    </citation>
    <scope>NUCLEOTIDE SEQUENCE [LARGE SCALE GENOMIC DNA]</scope>
    <source>
        <strain>ATCC 2001 / BCRC 20586 / JCM 3761 / NBRC 0622 / NRRL Y-65 / CBS 138</strain>
    </source>
</reference>